<feature type="chain" id="PRO_0000383565" description="Probable enoyl-CoA hydratase EchA17">
    <location>
        <begin position="1"/>
        <end position="261"/>
    </location>
</feature>
<feature type="site" description="Important for catalytic activity" evidence="1">
    <location>
        <position position="143"/>
    </location>
</feature>
<dbReference type="EC" id="4.2.1.17"/>
<dbReference type="EMBL" id="AL123456">
    <property type="protein sequence ID" value="CCP45848.1"/>
    <property type="status" value="ALT_INIT"/>
    <property type="molecule type" value="Genomic_DNA"/>
</dbReference>
<dbReference type="PIR" id="B70860">
    <property type="entry name" value="B70860"/>
</dbReference>
<dbReference type="RefSeq" id="NP_217555.1">
    <property type="nucleotide sequence ID" value="NC_000962.3"/>
</dbReference>
<dbReference type="SMR" id="P9WNN3"/>
<dbReference type="FunCoup" id="P9WNN3">
    <property type="interactions" value="101"/>
</dbReference>
<dbReference type="STRING" id="83332.Rv3039c"/>
<dbReference type="PaxDb" id="83332-Rv3039c"/>
<dbReference type="DNASU" id="888216"/>
<dbReference type="GeneID" id="888216"/>
<dbReference type="KEGG" id="mtu:Rv3039c"/>
<dbReference type="TubercuList" id="Rv3039c"/>
<dbReference type="eggNOG" id="COG1024">
    <property type="taxonomic scope" value="Bacteria"/>
</dbReference>
<dbReference type="InParanoid" id="P9WNN3"/>
<dbReference type="OrthoDB" id="8452484at2"/>
<dbReference type="PhylomeDB" id="P9WNN3"/>
<dbReference type="Proteomes" id="UP000001584">
    <property type="component" value="Chromosome"/>
</dbReference>
<dbReference type="GO" id="GO:0005886">
    <property type="term" value="C:plasma membrane"/>
    <property type="evidence" value="ECO:0007005"/>
    <property type="project" value="MTBBASE"/>
</dbReference>
<dbReference type="GO" id="GO:0004300">
    <property type="term" value="F:enoyl-CoA hydratase activity"/>
    <property type="evidence" value="ECO:0007669"/>
    <property type="project" value="UniProtKB-EC"/>
</dbReference>
<dbReference type="GO" id="GO:0006635">
    <property type="term" value="P:fatty acid beta-oxidation"/>
    <property type="evidence" value="ECO:0000318"/>
    <property type="project" value="GO_Central"/>
</dbReference>
<dbReference type="CDD" id="cd06558">
    <property type="entry name" value="crotonase-like"/>
    <property type="match status" value="1"/>
</dbReference>
<dbReference type="FunFam" id="3.90.226.10:FF:000009">
    <property type="entry name" value="Carnitinyl-CoA dehydratase"/>
    <property type="match status" value="1"/>
</dbReference>
<dbReference type="Gene3D" id="3.90.226.10">
    <property type="entry name" value="2-enoyl-CoA Hydratase, Chain A, domain 1"/>
    <property type="match status" value="1"/>
</dbReference>
<dbReference type="Gene3D" id="1.10.12.10">
    <property type="entry name" value="Lyase 2-enoyl-coa Hydratase, Chain A, domain 2"/>
    <property type="match status" value="1"/>
</dbReference>
<dbReference type="InterPro" id="IPR029045">
    <property type="entry name" value="ClpP/crotonase-like_dom_sf"/>
</dbReference>
<dbReference type="InterPro" id="IPR001753">
    <property type="entry name" value="Enoyl-CoA_hydra/iso"/>
</dbReference>
<dbReference type="InterPro" id="IPR014748">
    <property type="entry name" value="Enoyl-CoA_hydra_C"/>
</dbReference>
<dbReference type="NCBIfam" id="NF004524">
    <property type="entry name" value="PRK05869.1"/>
    <property type="match status" value="1"/>
</dbReference>
<dbReference type="PANTHER" id="PTHR11941:SF169">
    <property type="entry name" value="(7AS)-7A-METHYL-1,5-DIOXO-2,3,5,6,7,7A-HEXAHYDRO-1H-INDENE-CARBOXYL-COA HYDROLASE"/>
    <property type="match status" value="1"/>
</dbReference>
<dbReference type="PANTHER" id="PTHR11941">
    <property type="entry name" value="ENOYL-COA HYDRATASE-RELATED"/>
    <property type="match status" value="1"/>
</dbReference>
<dbReference type="Pfam" id="PF00378">
    <property type="entry name" value="ECH_1"/>
    <property type="match status" value="1"/>
</dbReference>
<dbReference type="SUPFAM" id="SSF52096">
    <property type="entry name" value="ClpP/crotonase"/>
    <property type="match status" value="1"/>
</dbReference>
<reference key="1">
    <citation type="journal article" date="1998" name="Nature">
        <title>Deciphering the biology of Mycobacterium tuberculosis from the complete genome sequence.</title>
        <authorList>
            <person name="Cole S.T."/>
            <person name="Brosch R."/>
            <person name="Parkhill J."/>
            <person name="Garnier T."/>
            <person name="Churcher C.M."/>
            <person name="Harris D.E."/>
            <person name="Gordon S.V."/>
            <person name="Eiglmeier K."/>
            <person name="Gas S."/>
            <person name="Barry C.E. III"/>
            <person name="Tekaia F."/>
            <person name="Badcock K."/>
            <person name="Basham D."/>
            <person name="Brown D."/>
            <person name="Chillingworth T."/>
            <person name="Connor R."/>
            <person name="Davies R.M."/>
            <person name="Devlin K."/>
            <person name="Feltwell T."/>
            <person name="Gentles S."/>
            <person name="Hamlin N."/>
            <person name="Holroyd S."/>
            <person name="Hornsby T."/>
            <person name="Jagels K."/>
            <person name="Krogh A."/>
            <person name="McLean J."/>
            <person name="Moule S."/>
            <person name="Murphy L.D."/>
            <person name="Oliver S."/>
            <person name="Osborne J."/>
            <person name="Quail M.A."/>
            <person name="Rajandream M.A."/>
            <person name="Rogers J."/>
            <person name="Rutter S."/>
            <person name="Seeger K."/>
            <person name="Skelton S."/>
            <person name="Squares S."/>
            <person name="Squares R."/>
            <person name="Sulston J.E."/>
            <person name="Taylor K."/>
            <person name="Whitehead S."/>
            <person name="Barrell B.G."/>
        </authorList>
    </citation>
    <scope>NUCLEOTIDE SEQUENCE [LARGE SCALE GENOMIC DNA]</scope>
    <source>
        <strain>ATCC 25618 / H37Rv</strain>
    </source>
</reference>
<reference key="2">
    <citation type="journal article" date="2022" name="Genomics">
        <title>Deep N-terminomics of Mycobacterium tuberculosis H37Rv extensively correct annotated encoding genes.</title>
        <authorList>
            <person name="Shi J."/>
            <person name="Meng S."/>
            <person name="Wan L."/>
            <person name="Zhang Z."/>
            <person name="Jiang S."/>
            <person name="Zhu H."/>
            <person name="Dai E."/>
            <person name="Chang L."/>
            <person name="Gao H."/>
            <person name="Wan K."/>
            <person name="Zhang L."/>
            <person name="Zhao X."/>
            <person name="Liu H."/>
            <person name="Lyu Z."/>
            <person name="Zhang Y."/>
            <person name="Xu P."/>
        </authorList>
    </citation>
    <scope>PROTEIN SEQUENCE OF 5-40</scope>
    <scope>SEQUENCE REVISION TO N-TERMINUS</scope>
    <source>
        <strain>H37Rv</strain>
    </source>
</reference>
<reference key="3">
    <citation type="journal article" date="2011" name="Mol. Cell. Proteomics">
        <title>Proteogenomic analysis of Mycobacterium tuberculosis by high resolution mass spectrometry.</title>
        <authorList>
            <person name="Kelkar D.S."/>
            <person name="Kumar D."/>
            <person name="Kumar P."/>
            <person name="Balakrishnan L."/>
            <person name="Muthusamy B."/>
            <person name="Yadav A.K."/>
            <person name="Shrivastava P."/>
            <person name="Marimuthu A."/>
            <person name="Anand S."/>
            <person name="Sundaram H."/>
            <person name="Kingsbury R."/>
            <person name="Harsha H.C."/>
            <person name="Nair B."/>
            <person name="Prasad T.S."/>
            <person name="Chauhan D.S."/>
            <person name="Katoch K."/>
            <person name="Katoch V.M."/>
            <person name="Kumar P."/>
            <person name="Chaerkady R."/>
            <person name="Ramachandran S."/>
            <person name="Dash D."/>
            <person name="Pandey A."/>
        </authorList>
    </citation>
    <scope>IDENTIFICATION BY MASS SPECTROMETRY [LARGE SCALE ANALYSIS]</scope>
    <source>
        <strain>ATCC 25618 / H37Rv</strain>
    </source>
</reference>
<accession>P9WNN3</accession>
<accession>L0TEA7</accession>
<accession>O53286</accession>
<accession>Q7D686</accession>
<evidence type="ECO:0000250" key="1"/>
<evidence type="ECO:0000269" key="2">
    <source>
    </source>
</evidence>
<evidence type="ECO:0000303" key="3">
    <source>
    </source>
</evidence>
<evidence type="ECO:0000305" key="4"/>
<sequence>MAAVTPTVPEFVNVVVSDGSQDAGLAMLLLSRPPTNAMTRQVYREVVAAANELGRRDDVAAVILYGGHEIFSAGDDMPELRTLSAQEADTAARIRQQAVDAVAAIPKPTVAAITGYALGAGLTLALAADWRVSGDNVKFGATEILAGLIPSGDGMARLTRAAGPSRAKELVFSGRFFDAEEALALGLIDDMVAPDDVYDAAAAWARRFLDGPPHALAAAKAGISDVYELAPAERIAAERRRYVEVFAAGQGGGSKGDRGGR</sequence>
<proteinExistence type="evidence at protein level"/>
<organism>
    <name type="scientific">Mycobacterium tuberculosis (strain ATCC 25618 / H37Rv)</name>
    <dbReference type="NCBI Taxonomy" id="83332"/>
    <lineage>
        <taxon>Bacteria</taxon>
        <taxon>Bacillati</taxon>
        <taxon>Actinomycetota</taxon>
        <taxon>Actinomycetes</taxon>
        <taxon>Mycobacteriales</taxon>
        <taxon>Mycobacteriaceae</taxon>
        <taxon>Mycobacterium</taxon>
        <taxon>Mycobacterium tuberculosis complex</taxon>
    </lineage>
</organism>
<protein>
    <recommendedName>
        <fullName evidence="3">Probable enoyl-CoA hydratase EchA17</fullName>
        <ecNumber>4.2.1.17</ecNumber>
    </recommendedName>
</protein>
<name>ECH17_MYCTU</name>
<gene>
    <name type="primary">echA17</name>
    <name type="ordered locus">Rv3039c</name>
</gene>
<keyword id="KW-0903">Direct protein sequencing</keyword>
<keyword id="KW-0276">Fatty acid metabolism</keyword>
<keyword id="KW-0443">Lipid metabolism</keyword>
<keyword id="KW-0456">Lyase</keyword>
<keyword id="KW-1185">Reference proteome</keyword>
<comment type="function">
    <text evidence="1">Could possibly oxidize fatty acids using specific components.</text>
</comment>
<comment type="catalytic activity">
    <reaction>
        <text>a (3S)-3-hydroxyacyl-CoA = a (2E)-enoyl-CoA + H2O</text>
        <dbReference type="Rhea" id="RHEA:16105"/>
        <dbReference type="ChEBI" id="CHEBI:15377"/>
        <dbReference type="ChEBI" id="CHEBI:57318"/>
        <dbReference type="ChEBI" id="CHEBI:58856"/>
        <dbReference type="EC" id="4.2.1.17"/>
    </reaction>
</comment>
<comment type="catalytic activity">
    <reaction>
        <text>a 4-saturated-(3S)-3-hydroxyacyl-CoA = a (3E)-enoyl-CoA + H2O</text>
        <dbReference type="Rhea" id="RHEA:20724"/>
        <dbReference type="ChEBI" id="CHEBI:15377"/>
        <dbReference type="ChEBI" id="CHEBI:58521"/>
        <dbReference type="ChEBI" id="CHEBI:137480"/>
        <dbReference type="EC" id="4.2.1.17"/>
    </reaction>
</comment>
<comment type="similarity">
    <text evidence="4">Belongs to the enoyl-CoA hydratase/isomerase family.</text>
</comment>
<comment type="sequence caution" evidence="2">
    <conflict type="erroneous initiation">
        <sequence resource="EMBL-CDS" id="CCP45848"/>
    </conflict>
    <text>Truncated N-terminus.</text>
</comment>